<name>RL22_PETMO</name>
<dbReference type="EMBL" id="CP000879">
    <property type="protein sequence ID" value="ABX31509.1"/>
    <property type="molecule type" value="Genomic_DNA"/>
</dbReference>
<dbReference type="RefSeq" id="WP_012208612.1">
    <property type="nucleotide sequence ID" value="NC_010003.1"/>
</dbReference>
<dbReference type="SMR" id="A9BHA0"/>
<dbReference type="STRING" id="403833.Pmob_0785"/>
<dbReference type="KEGG" id="pmo:Pmob_0785"/>
<dbReference type="eggNOG" id="COG0091">
    <property type="taxonomic scope" value="Bacteria"/>
</dbReference>
<dbReference type="HOGENOM" id="CLU_083987_3_1_0"/>
<dbReference type="OrthoDB" id="9805969at2"/>
<dbReference type="Proteomes" id="UP000000789">
    <property type="component" value="Chromosome"/>
</dbReference>
<dbReference type="GO" id="GO:0022625">
    <property type="term" value="C:cytosolic large ribosomal subunit"/>
    <property type="evidence" value="ECO:0007669"/>
    <property type="project" value="TreeGrafter"/>
</dbReference>
<dbReference type="GO" id="GO:0019843">
    <property type="term" value="F:rRNA binding"/>
    <property type="evidence" value="ECO:0007669"/>
    <property type="project" value="UniProtKB-UniRule"/>
</dbReference>
<dbReference type="GO" id="GO:0003735">
    <property type="term" value="F:structural constituent of ribosome"/>
    <property type="evidence" value="ECO:0007669"/>
    <property type="project" value="InterPro"/>
</dbReference>
<dbReference type="GO" id="GO:0006412">
    <property type="term" value="P:translation"/>
    <property type="evidence" value="ECO:0007669"/>
    <property type="project" value="UniProtKB-UniRule"/>
</dbReference>
<dbReference type="CDD" id="cd00336">
    <property type="entry name" value="Ribosomal_L22"/>
    <property type="match status" value="1"/>
</dbReference>
<dbReference type="Gene3D" id="3.90.470.10">
    <property type="entry name" value="Ribosomal protein L22/L17"/>
    <property type="match status" value="1"/>
</dbReference>
<dbReference type="HAMAP" id="MF_01331_B">
    <property type="entry name" value="Ribosomal_uL22_B"/>
    <property type="match status" value="1"/>
</dbReference>
<dbReference type="InterPro" id="IPR001063">
    <property type="entry name" value="Ribosomal_uL22"/>
</dbReference>
<dbReference type="InterPro" id="IPR005727">
    <property type="entry name" value="Ribosomal_uL22_bac/chlpt-type"/>
</dbReference>
<dbReference type="InterPro" id="IPR047867">
    <property type="entry name" value="Ribosomal_uL22_bac/org-type"/>
</dbReference>
<dbReference type="InterPro" id="IPR018260">
    <property type="entry name" value="Ribosomal_uL22_CS"/>
</dbReference>
<dbReference type="InterPro" id="IPR036394">
    <property type="entry name" value="Ribosomal_uL22_sf"/>
</dbReference>
<dbReference type="NCBIfam" id="TIGR01044">
    <property type="entry name" value="rplV_bact"/>
    <property type="match status" value="1"/>
</dbReference>
<dbReference type="PANTHER" id="PTHR13501">
    <property type="entry name" value="CHLOROPLAST 50S RIBOSOMAL PROTEIN L22-RELATED"/>
    <property type="match status" value="1"/>
</dbReference>
<dbReference type="PANTHER" id="PTHR13501:SF8">
    <property type="entry name" value="LARGE RIBOSOMAL SUBUNIT PROTEIN UL22M"/>
    <property type="match status" value="1"/>
</dbReference>
<dbReference type="Pfam" id="PF00237">
    <property type="entry name" value="Ribosomal_L22"/>
    <property type="match status" value="1"/>
</dbReference>
<dbReference type="SUPFAM" id="SSF54843">
    <property type="entry name" value="Ribosomal protein L22"/>
    <property type="match status" value="1"/>
</dbReference>
<dbReference type="PROSITE" id="PS00464">
    <property type="entry name" value="RIBOSOMAL_L22"/>
    <property type="match status" value="1"/>
</dbReference>
<evidence type="ECO:0000255" key="1">
    <source>
        <dbReference type="HAMAP-Rule" id="MF_01331"/>
    </source>
</evidence>
<evidence type="ECO:0000305" key="2"/>
<protein>
    <recommendedName>
        <fullName evidence="1">Large ribosomal subunit protein uL22</fullName>
    </recommendedName>
    <alternativeName>
        <fullName evidence="2">50S ribosomal protein L22</fullName>
    </alternativeName>
</protein>
<gene>
    <name evidence="1" type="primary">rplV</name>
    <name type="ordered locus">Pmob_0785</name>
</gene>
<comment type="function">
    <text evidence="1">This protein binds specifically to 23S rRNA; its binding is stimulated by other ribosomal proteins, e.g. L4, L17, and L20. It is important during the early stages of 50S assembly. It makes multiple contacts with different domains of the 23S rRNA in the assembled 50S subunit and ribosome (By similarity).</text>
</comment>
<comment type="function">
    <text evidence="1">The globular domain of the protein is located near the polypeptide exit tunnel on the outside of the subunit, while an extended beta-hairpin is found that lines the wall of the exit tunnel in the center of the 70S ribosome.</text>
</comment>
<comment type="subunit">
    <text evidence="1">Part of the 50S ribosomal subunit.</text>
</comment>
<comment type="similarity">
    <text evidence="1">Belongs to the universal ribosomal protein uL22 family.</text>
</comment>
<proteinExistence type="inferred from homology"/>
<accession>A9BHA0</accession>
<organism>
    <name type="scientific">Petrotoga mobilis (strain DSM 10674 / SJ95)</name>
    <dbReference type="NCBI Taxonomy" id="403833"/>
    <lineage>
        <taxon>Bacteria</taxon>
        <taxon>Thermotogati</taxon>
        <taxon>Thermotogota</taxon>
        <taxon>Thermotogae</taxon>
        <taxon>Petrotogales</taxon>
        <taxon>Petrotogaceae</taxon>
        <taxon>Petrotoga</taxon>
    </lineage>
</organism>
<reference key="1">
    <citation type="submission" date="2007-11" db="EMBL/GenBank/DDBJ databases">
        <title>Complete sequence of Petroga mobilis SJ95.</title>
        <authorList>
            <consortium name="US DOE Joint Genome Institute"/>
            <person name="Copeland A."/>
            <person name="Lucas S."/>
            <person name="Lapidus A."/>
            <person name="Barry K."/>
            <person name="Glavina del Rio T."/>
            <person name="Dalin E."/>
            <person name="Tice H."/>
            <person name="Pitluck S."/>
            <person name="Meincke L."/>
            <person name="Brettin T."/>
            <person name="Bruce D."/>
            <person name="Detter J.C."/>
            <person name="Han C."/>
            <person name="Kuske C.R."/>
            <person name="Schmutz J."/>
            <person name="Larimer F."/>
            <person name="Land M."/>
            <person name="Hauser L."/>
            <person name="Kyrpides N."/>
            <person name="Mikhailova N."/>
            <person name="Noll K."/>
            <person name="Richardson P."/>
        </authorList>
    </citation>
    <scope>NUCLEOTIDE SEQUENCE [LARGE SCALE GENOMIC DNA]</scope>
    <source>
        <strain>DSM 10674 / SJ95</strain>
    </source>
</reference>
<sequence length="149" mass="17144">MATNTNVSRVQEDGRKVKRSVYHRMRKEKEASEPIVEARAVTKYVRISPRKARSMANSIRNKDISEALQILTFSPKKSARILYKTLMSAIANAENNFGLNAENLYVSEIMVNEGPRLKRLWPRSHGRADILQKRMSHIYITVRDKSADK</sequence>
<feature type="chain" id="PRO_0000354502" description="Large ribosomal subunit protein uL22">
    <location>
        <begin position="1"/>
        <end position="149"/>
    </location>
</feature>
<keyword id="KW-0687">Ribonucleoprotein</keyword>
<keyword id="KW-0689">Ribosomal protein</keyword>
<keyword id="KW-0694">RNA-binding</keyword>
<keyword id="KW-0699">rRNA-binding</keyword>